<sequence>MQPVLFRTLSLGVAIAAASSSAFAATLDGGAVAAPDEYGAKVAAQILKAGGNAVDAAVATAFTLAVTYPEAGNIGGGGFMTLYMDGKPYFLDYREVAPKAASKTMYLDDKGEVIENLSLVGAKAAGVPGTVMGLWEAHKRFGKLPWSELLTPAIGYAQKGFKVADKQFQYRQDAVALFNGKTNFGDYFGHMKAGEAFLQPDLAKTLERIADKGPDEFYKGHTADLLVAQMQQDKGLITHQDLADYKVRWREPMRVDWQGNTLYTAPLPSSGGIALAQLLGIKENRAADFKGVELNSARYIHLLAEIEKRVFADRADYLGDPDFSKVPVARLTDPAYLKQRAAEVNPTAISPTEKVRPGLEPHQTTHFSIVDADGNAVSNTYTLNWDFGSGVVVKGAGFLLNDEMDDFSAKPGVANAFGVVGSDANAIEPGKRMLSSMSPSIVTRDGKVSLVVGTPGGSRIFTSIFQVLNNIYDFHLPLEKAVAAQRVHHQLLPKDTIYYDAYAPLAGKVAEELKAMGYTLEDQGWNMGDIQAIRVDGKALETASDPRGRGVGLVVKP</sequence>
<proteinExistence type="inferred from homology"/>
<keyword id="KW-0012">Acyltransferase</keyword>
<keyword id="KW-0317">Glutathione biosynthesis</keyword>
<keyword id="KW-0378">Hydrolase</keyword>
<keyword id="KW-0574">Periplasm</keyword>
<keyword id="KW-0645">Protease</keyword>
<keyword id="KW-1185">Reference proteome</keyword>
<keyword id="KW-0732">Signal</keyword>
<keyword id="KW-0808">Transferase</keyword>
<keyword id="KW-0865">Zymogen</keyword>
<protein>
    <recommendedName>
        <fullName>Glutathione hydrolase proenzyme</fullName>
        <ecNumber>3.4.19.13</ecNumber>
    </recommendedName>
    <alternativeName>
        <fullName>Gamma-glutamyltranspeptidase proenzyme</fullName>
        <ecNumber>2.3.2.2</ecNumber>
    </alternativeName>
    <component>
        <recommendedName>
            <fullName>Glutathione hydrolase large chain</fullName>
        </recommendedName>
    </component>
    <component>
        <recommendedName>
            <fullName>Glutathione hydrolase small chain</fullName>
        </recommendedName>
    </component>
</protein>
<name>GGT_PSEAE</name>
<organism>
    <name type="scientific">Pseudomonas aeruginosa (strain ATCC 15692 / DSM 22644 / CIP 104116 / JCM 14847 / LMG 12228 / 1C / PRS 101 / PAO1)</name>
    <dbReference type="NCBI Taxonomy" id="208964"/>
    <lineage>
        <taxon>Bacteria</taxon>
        <taxon>Pseudomonadati</taxon>
        <taxon>Pseudomonadota</taxon>
        <taxon>Gammaproteobacteria</taxon>
        <taxon>Pseudomonadales</taxon>
        <taxon>Pseudomonadaceae</taxon>
        <taxon>Pseudomonas</taxon>
    </lineage>
</organism>
<gene>
    <name type="primary">ggt</name>
    <name type="ordered locus">PA1338</name>
</gene>
<reference key="1">
    <citation type="journal article" date="2000" name="Nature">
        <title>Complete genome sequence of Pseudomonas aeruginosa PAO1, an opportunistic pathogen.</title>
        <authorList>
            <person name="Stover C.K."/>
            <person name="Pham X.-Q.T."/>
            <person name="Erwin A.L."/>
            <person name="Mizoguchi S.D."/>
            <person name="Warrener P."/>
            <person name="Hickey M.J."/>
            <person name="Brinkman F.S.L."/>
            <person name="Hufnagle W.O."/>
            <person name="Kowalik D.J."/>
            <person name="Lagrou M."/>
            <person name="Garber R.L."/>
            <person name="Goltry L."/>
            <person name="Tolentino E."/>
            <person name="Westbrock-Wadman S."/>
            <person name="Yuan Y."/>
            <person name="Brody L.L."/>
            <person name="Coulter S.N."/>
            <person name="Folger K.R."/>
            <person name="Kas A."/>
            <person name="Larbig K."/>
            <person name="Lim R.M."/>
            <person name="Smith K.A."/>
            <person name="Spencer D.H."/>
            <person name="Wong G.K.-S."/>
            <person name="Wu Z."/>
            <person name="Paulsen I.T."/>
            <person name="Reizer J."/>
            <person name="Saier M.H. Jr."/>
            <person name="Hancock R.E.W."/>
            <person name="Lory S."/>
            <person name="Olson M.V."/>
        </authorList>
    </citation>
    <scope>NUCLEOTIDE SEQUENCE [LARGE SCALE GENOMIC DNA]</scope>
    <source>
        <strain>ATCC 15692 / DSM 22644 / CIP 104116 / JCM 14847 / LMG 12228 / 1C / PRS 101 / PAO1</strain>
    </source>
</reference>
<accession>Q9I406</accession>
<dbReference type="EC" id="3.4.19.13"/>
<dbReference type="EC" id="2.3.2.2"/>
<dbReference type="EMBL" id="AE004091">
    <property type="protein sequence ID" value="AAG04727.1"/>
    <property type="molecule type" value="Genomic_DNA"/>
</dbReference>
<dbReference type="PIR" id="D83478">
    <property type="entry name" value="D83478"/>
</dbReference>
<dbReference type="RefSeq" id="NP_250029.1">
    <property type="nucleotide sequence ID" value="NC_002516.2"/>
</dbReference>
<dbReference type="RefSeq" id="WP_003086881.1">
    <property type="nucleotide sequence ID" value="NZ_QZGE01000005.1"/>
</dbReference>
<dbReference type="SMR" id="Q9I406"/>
<dbReference type="FunCoup" id="Q9I406">
    <property type="interactions" value="351"/>
</dbReference>
<dbReference type="STRING" id="208964.PA1338"/>
<dbReference type="MEROPS" id="T03.001"/>
<dbReference type="PaxDb" id="208964-PA1338"/>
<dbReference type="GeneID" id="882262"/>
<dbReference type="KEGG" id="pae:PA1338"/>
<dbReference type="PATRIC" id="fig|208964.12.peg.1390"/>
<dbReference type="PseudoCAP" id="PA1338"/>
<dbReference type="HOGENOM" id="CLU_014813_0_3_6"/>
<dbReference type="InParanoid" id="Q9I406"/>
<dbReference type="OrthoDB" id="5297205at2"/>
<dbReference type="PhylomeDB" id="Q9I406"/>
<dbReference type="BioCyc" id="PAER208964:G1FZ6-1364-MONOMER"/>
<dbReference type="UniPathway" id="UPA00204"/>
<dbReference type="Proteomes" id="UP000002438">
    <property type="component" value="Chromosome"/>
</dbReference>
<dbReference type="GO" id="GO:0042597">
    <property type="term" value="C:periplasmic space"/>
    <property type="evidence" value="ECO:0007669"/>
    <property type="project" value="UniProtKB-SubCell"/>
</dbReference>
<dbReference type="GO" id="GO:0036374">
    <property type="term" value="F:glutathione hydrolase activity"/>
    <property type="evidence" value="ECO:0007669"/>
    <property type="project" value="UniProtKB-EC"/>
</dbReference>
<dbReference type="GO" id="GO:0103068">
    <property type="term" value="F:leukotriene C4 gamma-glutamyl transferase activity"/>
    <property type="evidence" value="ECO:0007669"/>
    <property type="project" value="UniProtKB-EC"/>
</dbReference>
<dbReference type="GO" id="GO:0006750">
    <property type="term" value="P:glutathione biosynthetic process"/>
    <property type="evidence" value="ECO:0007669"/>
    <property type="project" value="UniProtKB-KW"/>
</dbReference>
<dbReference type="GO" id="GO:0006751">
    <property type="term" value="P:glutathione catabolic process"/>
    <property type="evidence" value="ECO:0007669"/>
    <property type="project" value="InterPro"/>
</dbReference>
<dbReference type="GO" id="GO:0006508">
    <property type="term" value="P:proteolysis"/>
    <property type="evidence" value="ECO:0007669"/>
    <property type="project" value="UniProtKB-KW"/>
</dbReference>
<dbReference type="Gene3D" id="1.10.246.130">
    <property type="match status" value="1"/>
</dbReference>
<dbReference type="Gene3D" id="3.60.20.40">
    <property type="match status" value="1"/>
</dbReference>
<dbReference type="InterPro" id="IPR051792">
    <property type="entry name" value="GGT_bact"/>
</dbReference>
<dbReference type="InterPro" id="IPR055262">
    <property type="entry name" value="GGT_CS"/>
</dbReference>
<dbReference type="InterPro" id="IPR043138">
    <property type="entry name" value="GGT_lsub_C"/>
</dbReference>
<dbReference type="InterPro" id="IPR000101">
    <property type="entry name" value="GGT_peptidase"/>
</dbReference>
<dbReference type="InterPro" id="IPR043137">
    <property type="entry name" value="GGT_ssub"/>
</dbReference>
<dbReference type="InterPro" id="IPR029055">
    <property type="entry name" value="Ntn_hydrolases_N"/>
</dbReference>
<dbReference type="NCBIfam" id="TIGR00066">
    <property type="entry name" value="g_glut_trans"/>
    <property type="match status" value="1"/>
</dbReference>
<dbReference type="PANTHER" id="PTHR43199">
    <property type="entry name" value="GLUTATHIONE HYDROLASE"/>
    <property type="match status" value="1"/>
</dbReference>
<dbReference type="PANTHER" id="PTHR43199:SF1">
    <property type="entry name" value="GLUTATHIONE HYDROLASE PROENZYME"/>
    <property type="match status" value="1"/>
</dbReference>
<dbReference type="Pfam" id="PF01019">
    <property type="entry name" value="G_glu_transpept"/>
    <property type="match status" value="1"/>
</dbReference>
<dbReference type="PRINTS" id="PR01210">
    <property type="entry name" value="GGTRANSPTASE"/>
</dbReference>
<dbReference type="SUPFAM" id="SSF56235">
    <property type="entry name" value="N-terminal nucleophile aminohydrolases (Ntn hydrolases)"/>
    <property type="match status" value="1"/>
</dbReference>
<dbReference type="PROSITE" id="PS00462">
    <property type="entry name" value="G_GLU_TRANSPEPTIDASE"/>
    <property type="match status" value="1"/>
</dbReference>
<comment type="catalytic activity">
    <reaction>
        <text>an N-terminal (5-L-glutamyl)-[peptide] + an alpha-amino acid = 5-L-glutamyl amino acid + an N-terminal L-alpha-aminoacyl-[peptide]</text>
        <dbReference type="Rhea" id="RHEA:23904"/>
        <dbReference type="Rhea" id="RHEA-COMP:9780"/>
        <dbReference type="Rhea" id="RHEA-COMP:9795"/>
        <dbReference type="ChEBI" id="CHEBI:77644"/>
        <dbReference type="ChEBI" id="CHEBI:78597"/>
        <dbReference type="ChEBI" id="CHEBI:78599"/>
        <dbReference type="ChEBI" id="CHEBI:78608"/>
        <dbReference type="EC" id="2.3.2.2"/>
    </reaction>
</comment>
<comment type="catalytic activity">
    <reaction>
        <text>glutathione + H2O = L-cysteinylglycine + L-glutamate</text>
        <dbReference type="Rhea" id="RHEA:28807"/>
        <dbReference type="ChEBI" id="CHEBI:15377"/>
        <dbReference type="ChEBI" id="CHEBI:29985"/>
        <dbReference type="ChEBI" id="CHEBI:57925"/>
        <dbReference type="ChEBI" id="CHEBI:61694"/>
        <dbReference type="EC" id="3.4.19.13"/>
    </reaction>
</comment>
<comment type="catalytic activity">
    <reaction>
        <text>an S-substituted glutathione + H2O = an S-substituted L-cysteinylglycine + L-glutamate</text>
        <dbReference type="Rhea" id="RHEA:59468"/>
        <dbReference type="ChEBI" id="CHEBI:15377"/>
        <dbReference type="ChEBI" id="CHEBI:29985"/>
        <dbReference type="ChEBI" id="CHEBI:90779"/>
        <dbReference type="ChEBI" id="CHEBI:143103"/>
        <dbReference type="EC" id="3.4.19.13"/>
    </reaction>
</comment>
<comment type="pathway">
    <text>Sulfur metabolism; glutathione metabolism.</text>
</comment>
<comment type="subunit">
    <text evidence="1">This enzyme consists of two polypeptide chains, which are synthesized in precursor form from a single polypeptide.</text>
</comment>
<comment type="subcellular location">
    <subcellularLocation>
        <location evidence="1">Periplasm</location>
    </subcellularLocation>
</comment>
<comment type="PTM">
    <text evidence="1">Cleaved by autocatalysis into a large and a small subunit.</text>
</comment>
<comment type="similarity">
    <text evidence="3">Belongs to the gamma-glutamyltransferase family.</text>
</comment>
<feature type="signal peptide" evidence="2">
    <location>
        <begin position="1"/>
        <end position="24"/>
    </location>
</feature>
<feature type="chain" id="PRO_0000287773" description="Glutathione hydrolase large chain">
    <location>
        <begin position="25"/>
        <end position="363"/>
    </location>
</feature>
<feature type="chain" id="PRO_0000287774" description="Glutathione hydrolase small chain">
    <location>
        <begin position="364"/>
        <end position="557"/>
    </location>
</feature>
<feature type="active site" description="Nucleophile" evidence="1">
    <location>
        <position position="364"/>
    </location>
</feature>
<feature type="binding site" evidence="1">
    <location>
        <position position="94"/>
    </location>
    <ligand>
        <name>L-glutamate</name>
        <dbReference type="ChEBI" id="CHEBI:29985"/>
    </ligand>
</feature>
<feature type="binding site" evidence="1">
    <location>
        <position position="382"/>
    </location>
    <ligand>
        <name>L-glutamate</name>
        <dbReference type="ChEBI" id="CHEBI:29985"/>
    </ligand>
</feature>
<feature type="binding site" evidence="1">
    <location>
        <position position="384"/>
    </location>
    <ligand>
        <name>L-glutamate</name>
        <dbReference type="ChEBI" id="CHEBI:29985"/>
    </ligand>
</feature>
<feature type="binding site" evidence="1">
    <location>
        <position position="403"/>
    </location>
    <ligand>
        <name>L-glutamate</name>
        <dbReference type="ChEBI" id="CHEBI:29985"/>
    </ligand>
</feature>
<feature type="binding site" evidence="1">
    <location>
        <position position="406"/>
    </location>
    <ligand>
        <name>L-glutamate</name>
        <dbReference type="ChEBI" id="CHEBI:29985"/>
    </ligand>
</feature>
<feature type="binding site" evidence="1">
    <location>
        <begin position="435"/>
        <end position="436"/>
    </location>
    <ligand>
        <name>L-glutamate</name>
        <dbReference type="ChEBI" id="CHEBI:29985"/>
    </ligand>
</feature>
<feature type="binding site" evidence="1">
    <location>
        <begin position="456"/>
        <end position="457"/>
    </location>
    <ligand>
        <name>L-glutamate</name>
        <dbReference type="ChEBI" id="CHEBI:29985"/>
    </ligand>
</feature>
<evidence type="ECO:0000250" key="1"/>
<evidence type="ECO:0000255" key="2"/>
<evidence type="ECO:0000305" key="3"/>